<evidence type="ECO:0000250" key="1">
    <source>
        <dbReference type="UniProtKB" id="Q3UMR5"/>
    </source>
</evidence>
<evidence type="ECO:0000255" key="2"/>
<evidence type="ECO:0000269" key="3">
    <source>
    </source>
</evidence>
<evidence type="ECO:0000269" key="4">
    <source>
    </source>
</evidence>
<evidence type="ECO:0000269" key="5">
    <source>
    </source>
</evidence>
<evidence type="ECO:0000269" key="6">
    <source>
    </source>
</evidence>
<evidence type="ECO:0000269" key="7">
    <source>
    </source>
</evidence>
<evidence type="ECO:0000269" key="8">
    <source>
    </source>
</evidence>
<evidence type="ECO:0000269" key="9">
    <source>
    </source>
</evidence>
<evidence type="ECO:0000269" key="10">
    <source>
    </source>
</evidence>
<evidence type="ECO:0000269" key="11">
    <source>
    </source>
</evidence>
<evidence type="ECO:0000269" key="12">
    <source>
    </source>
</evidence>
<evidence type="ECO:0000269" key="13">
    <source>
    </source>
</evidence>
<evidence type="ECO:0000269" key="14">
    <source>
    </source>
</evidence>
<evidence type="ECO:0000269" key="15">
    <source>
    </source>
</evidence>
<evidence type="ECO:0000269" key="16">
    <source>
    </source>
</evidence>
<evidence type="ECO:0000269" key="17">
    <source>
    </source>
</evidence>
<evidence type="ECO:0000269" key="18">
    <source>
    </source>
</evidence>
<evidence type="ECO:0000269" key="19">
    <source>
    </source>
</evidence>
<evidence type="ECO:0000269" key="20">
    <source>
    </source>
</evidence>
<evidence type="ECO:0000269" key="21">
    <source>
    </source>
</evidence>
<evidence type="ECO:0000269" key="22">
    <source>
    </source>
</evidence>
<evidence type="ECO:0000269" key="23">
    <source>
    </source>
</evidence>
<evidence type="ECO:0000269" key="24">
    <source>
    </source>
</evidence>
<evidence type="ECO:0000269" key="25">
    <source>
    </source>
</evidence>
<evidence type="ECO:0000269" key="26">
    <source>
    </source>
</evidence>
<evidence type="ECO:0000269" key="27">
    <source>
    </source>
</evidence>
<evidence type="ECO:0000269" key="28">
    <source>
    </source>
</evidence>
<evidence type="ECO:0000269" key="29">
    <source>
    </source>
</evidence>
<evidence type="ECO:0000269" key="30">
    <source>
    </source>
</evidence>
<evidence type="ECO:0000269" key="31">
    <source>
    </source>
</evidence>
<evidence type="ECO:0000269" key="32">
    <source>
    </source>
</evidence>
<evidence type="ECO:0000269" key="33">
    <source>
    </source>
</evidence>
<evidence type="ECO:0000269" key="34">
    <source>
    </source>
</evidence>
<evidence type="ECO:0000269" key="35">
    <source>
    </source>
</evidence>
<evidence type="ECO:0000269" key="36">
    <source>
    </source>
</evidence>
<evidence type="ECO:0000269" key="37">
    <source>
    </source>
</evidence>
<evidence type="ECO:0000269" key="38">
    <source>
    </source>
</evidence>
<evidence type="ECO:0000303" key="39">
    <source>
    </source>
</evidence>
<evidence type="ECO:0000303" key="40">
    <source>
    </source>
</evidence>
<evidence type="ECO:0000303" key="41">
    <source>
    </source>
</evidence>
<evidence type="ECO:0000303" key="42">
    <source>
    </source>
</evidence>
<evidence type="ECO:0000305" key="43"/>
<evidence type="ECO:0000305" key="44">
    <source>
    </source>
</evidence>
<evidence type="ECO:0000305" key="45">
    <source>
    </source>
</evidence>
<evidence type="ECO:0000305" key="46">
    <source>
    </source>
</evidence>
<evidence type="ECO:0000305" key="47">
    <source>
    </source>
</evidence>
<evidence type="ECO:0000305" key="48">
    <source>
    </source>
</evidence>
<evidence type="ECO:0000305" key="49">
    <source>
    </source>
</evidence>
<evidence type="ECO:0000305" key="50">
    <source>
    </source>
</evidence>
<evidence type="ECO:0000305" key="51">
    <source>
    </source>
</evidence>
<evidence type="ECO:0000312" key="52">
    <source>
        <dbReference type="HGNC" id="HGNC:23526"/>
    </source>
</evidence>
<evidence type="ECO:0007744" key="53">
    <source>
        <dbReference type="PDB" id="4XSJ"/>
    </source>
</evidence>
<evidence type="ECO:0007744" key="54">
    <source>
        <dbReference type="PDB" id="4XTB"/>
    </source>
</evidence>
<evidence type="ECO:0007744" key="55">
    <source>
        <dbReference type="PDB" id="5BZ6"/>
    </source>
</evidence>
<evidence type="ECO:0007744" key="56">
    <source>
        <dbReference type="PDB" id="6K7X"/>
    </source>
</evidence>
<evidence type="ECO:0007744" key="57">
    <source>
        <dbReference type="PDB" id="6K7Y"/>
    </source>
</evidence>
<evidence type="ECO:0007744" key="58">
    <source>
        <dbReference type="PDB" id="6O58"/>
    </source>
</evidence>
<evidence type="ECO:0007744" key="59">
    <source>
        <dbReference type="PDB" id="6O5B"/>
    </source>
</evidence>
<evidence type="ECO:0007744" key="60">
    <source>
        <dbReference type="PDB" id="6WDN"/>
    </source>
</evidence>
<evidence type="ECO:0007744" key="61">
    <source>
        <dbReference type="PDB" id="6WDO"/>
    </source>
</evidence>
<evidence type="ECO:0007744" key="62">
    <source>
        <dbReference type="PDB" id="6XJV"/>
    </source>
</evidence>
<evidence type="ECO:0007744" key="63">
    <source>
        <dbReference type="PDB" id="6XJX"/>
    </source>
</evidence>
<evidence type="ECO:0007829" key="64">
    <source>
        <dbReference type="PDB" id="4XTB"/>
    </source>
</evidence>
<evidence type="ECO:0007829" key="65">
    <source>
        <dbReference type="PDB" id="5KUI"/>
    </source>
</evidence>
<evidence type="ECO:0007829" key="66">
    <source>
        <dbReference type="PDB" id="6WDN"/>
    </source>
</evidence>
<name>MCU_HUMAN</name>
<accession>Q8NE86</accession>
<accession>B2RDF3</accession>
<accession>B3KXV7</accession>
<accession>Q96FL3</accession>
<sequence length="351" mass="39867">MAAAAGRSLLLLLSSRGGGGGGAGGCGALTAGCFPGLGVSRHRQQQHHRTVHQRIASWQNLGAVYCSTVVPSDDVTVVYQNGLPVISVRLPSRRERCQFTLKPISDSVGVFLRQLQEEDRGIDRVAIYSPDGVRVAASTGIDLLLLDDFKLVINDLTYHVRPPKRDLLSHENAATLNDVKTLVQQLYTTLCIEQHQLNKERELIERLEDLKEQLAPLEKVRIEISRKAEKRTTLVLWGGLAYMATQFGILARLTWWEYSWDIMEPVTYFITYGSAMAMYAYFVMTRQEYVYPEARDRQYLLFFHKGAKKSRFDLEKYNQLKDAIAQAEMDLKRLRDPLQVHLPLRQIGEKD</sequence>
<organism>
    <name type="scientific">Homo sapiens</name>
    <name type="common">Human</name>
    <dbReference type="NCBI Taxonomy" id="9606"/>
    <lineage>
        <taxon>Eukaryota</taxon>
        <taxon>Metazoa</taxon>
        <taxon>Chordata</taxon>
        <taxon>Craniata</taxon>
        <taxon>Vertebrata</taxon>
        <taxon>Euteleostomi</taxon>
        <taxon>Mammalia</taxon>
        <taxon>Eutheria</taxon>
        <taxon>Euarchontoglires</taxon>
        <taxon>Primates</taxon>
        <taxon>Haplorrhini</taxon>
        <taxon>Catarrhini</taxon>
        <taxon>Hominidae</taxon>
        <taxon>Homo</taxon>
    </lineage>
</organism>
<keyword id="KW-0002">3D-structure</keyword>
<keyword id="KW-0007">Acetylation</keyword>
<keyword id="KW-0025">Alternative splicing</keyword>
<keyword id="KW-0106">Calcium</keyword>
<keyword id="KW-0107">Calcium channel</keyword>
<keyword id="KW-0109">Calcium transport</keyword>
<keyword id="KW-0175">Coiled coil</keyword>
<keyword id="KW-0318">Glutathionylation</keyword>
<keyword id="KW-0407">Ion channel</keyword>
<keyword id="KW-0406">Ion transport</keyword>
<keyword id="KW-0472">Membrane</keyword>
<keyword id="KW-0496">Mitochondrion</keyword>
<keyword id="KW-0999">Mitochondrion inner membrane</keyword>
<keyword id="KW-0597">Phosphoprotein</keyword>
<keyword id="KW-1267">Proteomics identification</keyword>
<keyword id="KW-1185">Reference proteome</keyword>
<keyword id="KW-0809">Transit peptide</keyword>
<keyword id="KW-0812">Transmembrane</keyword>
<keyword id="KW-1133">Transmembrane helix</keyword>
<keyword id="KW-0813">Transport</keyword>
<feature type="transit peptide" description="Mitochondrion" evidence="2">
    <location>
        <begin position="1"/>
        <end position="50"/>
    </location>
</feature>
<feature type="chain" id="PRO_0000282976" description="Calcium uniporter protein, mitochondrial">
    <location>
        <begin position="51"/>
        <end position="351"/>
    </location>
</feature>
<feature type="topological domain" description="Mitochondrial matrix" evidence="48 49 50 51">
    <location>
        <begin position="51"/>
        <end position="233"/>
    </location>
</feature>
<feature type="transmembrane region" description="Helical" evidence="31 33 34 35 56 57 58 59 60 61 62 63">
    <location>
        <begin position="234"/>
        <end position="255"/>
    </location>
</feature>
<feature type="topological domain" description="Mitochondrial intermembrane" evidence="48 49 50 51">
    <location>
        <begin position="256"/>
        <end position="262"/>
    </location>
</feature>
<feature type="transmembrane region" description="Helical" evidence="31 33 34 35 56 57 58 59 60 61 62 63">
    <location>
        <begin position="263"/>
        <end position="284"/>
    </location>
</feature>
<feature type="topological domain" description="Mitochondrial matrix" evidence="12 48 49 50 51">
    <location>
        <begin position="285"/>
        <end position="351"/>
    </location>
</feature>
<feature type="region of interest" description="N-terminal MCU domain" evidence="20">
    <location>
        <begin position="75"/>
        <end position="165"/>
    </location>
</feature>
<feature type="region of interest" description="Juxtamembrane helix" evidence="31 36">
    <location>
        <begin position="285"/>
        <end position="290"/>
    </location>
</feature>
<feature type="coiled-coil region" evidence="2">
    <location>
        <begin position="192"/>
        <end position="223"/>
    </location>
</feature>
<feature type="coiled-coil region" evidence="2">
    <location>
        <begin position="311"/>
        <end position="339"/>
    </location>
</feature>
<feature type="short sequence motif" description="Selectivity filter" evidence="31 33">
    <location>
        <begin position="260"/>
        <end position="268"/>
    </location>
</feature>
<feature type="binding site" evidence="31 33 35 56 57 58 59 61">
    <location>
        <position position="264"/>
    </location>
    <ligand>
        <name>Ca(2+)</name>
        <dbReference type="ChEBI" id="CHEBI:29108"/>
    </ligand>
</feature>
<feature type="modified residue" description="Phosphoserine; by CaMK2" evidence="44">
    <location>
        <position position="57"/>
    </location>
</feature>
<feature type="modified residue" description="Phosphoserine; by CaMK2" evidence="44">
    <location>
        <position position="92"/>
    </location>
</feature>
<feature type="modified residue" description="S-glutathionyl cysteine" evidence="26">
    <location>
        <position position="97"/>
    </location>
</feature>
<feature type="modified residue" description="N6-acetyllysine" evidence="1">
    <location>
        <position position="332"/>
    </location>
</feature>
<feature type="splice variant" id="VSP_041687" description="In isoform 3." evidence="39">
    <original>MAAAAGRSLLLLLSSRGGGGGGAGGCGALTAGCFPGLGVSRHRQQQHHRT</original>
    <variation>M</variation>
    <location>
        <begin position="1"/>
        <end position="50"/>
    </location>
</feature>
<feature type="splice variant" id="VSP_024263" description="In isoform 2." evidence="40">
    <original>DLLSHENAATLNDVKTLVQQLYTTLCIEQHQLNKERELIERLEDLKEQLAPLEK</original>
    <variation>VEMGFCHVGQNGFELLTSSYLPASASQSAEIIA</variation>
    <location>
        <begin position="166"/>
        <end position="219"/>
    </location>
</feature>
<feature type="mutagenesis site" description="Decreased MCU current; when associated with A-92." evidence="8">
    <original>S</original>
    <variation>A</variation>
    <location>
        <position position="57"/>
    </location>
</feature>
<feature type="mutagenesis site" description="Does not affect glutathionylation in response to reactive oxygen species." evidence="26">
    <original>C</original>
    <variation>A</variation>
    <location>
        <position position="66"/>
    </location>
</feature>
<feature type="mutagenesis site" description="Decreased MCU current; when associated with A-57." evidence="8">
    <original>S</original>
    <variation>A</variation>
    <location>
        <position position="92"/>
    </location>
</feature>
<feature type="mutagenesis site" description="Impairs calcium uptake, but has no effect on oligomerization and interaction with MICU1 and MICU2." evidence="20">
    <original>S</original>
    <variation>A</variation>
    <location>
        <position position="92"/>
    </location>
</feature>
<feature type="mutagenesis site" description="Abolished glutathionylation in response to reactive oxygen species." evidence="26">
    <original>C</original>
    <variation>A</variation>
    <location>
        <position position="97"/>
    </location>
</feature>
<feature type="mutagenesis site" description="No effect on calcium uptake in presence of high concentrations of calcium. Abolished dimerization of MCU." evidence="31 33">
    <original>D</original>
    <variation>R</variation>
    <location>
        <position position="123"/>
    </location>
</feature>
<feature type="mutagenesis site" description="No effect on calcium uptake, oligomerization and interaction with MICU1 and MICU2." evidence="20">
    <original>K</original>
    <variation>A</variation>
    <location>
        <position position="180"/>
    </location>
</feature>
<feature type="mutagenesis site" description="Does not affect glutathionylation in response to reactive oxygen species." evidence="26">
    <original>C</original>
    <variation>A</variation>
    <location>
        <position position="191"/>
    </location>
</feature>
<feature type="mutagenesis site" description="Abolished calcium uptake." evidence="36">
    <original>L</original>
    <variation>W</variation>
    <location>
        <position position="240"/>
    </location>
</feature>
<feature type="mutagenesis site" description="Abolished interaction with EMRE/SMDT1 and calcium uptake." evidence="36">
    <original>A</original>
    <variation>W</variation>
    <location>
        <position position="241"/>
    </location>
</feature>
<feature type="mutagenesis site" description="Abolished calcium uptake." evidence="36">
    <original>G</original>
    <variation>W</variation>
    <location>
        <position position="248"/>
    </location>
</feature>
<feature type="mutagenesis site" description="According to a report, inhibits calcium uptake. According to a subsequent report, does not affect greatly calcium uptake." evidence="3 24">
    <original>E</original>
    <variation>A</variation>
    <location>
        <position position="257"/>
    </location>
</feature>
<feature type="mutagenesis site" description="Does not affect greatly calcium uptake." evidence="24">
    <original>E</original>
    <variation>S</variation>
    <location>
        <position position="257"/>
    </location>
</feature>
<feature type="mutagenesis site" description="Does not inhibit calcium uptake. Strongly reduced sensitivity to ruthenium red inhibition." evidence="3 12">
    <original>S</original>
    <variation>A</variation>
    <location>
        <position position="259"/>
    </location>
</feature>
<feature type="mutagenesis site" description="Prevents entrance of calcium into the pore." evidence="24 30">
    <original>S</original>
    <variation>R</variation>
    <location>
        <position position="259"/>
    </location>
</feature>
<feature type="mutagenesis site" description="Abolished mitochondrial calcium uptake." evidence="27 28">
    <original>W</original>
    <variation>A</variation>
    <variation>F</variation>
    <variation>Y</variation>
    <location>
        <position position="260"/>
    </location>
</feature>
<feature type="mutagenesis site" description="Dominant negative (DN) mutant; inhibits calcium uptake. Inhibits calcium channel activity. Expression of the dominant negative protein in mice, leads to mice that are incapable of physiological fight or flight heart rate acceleration." evidence="3 4 18">
    <original>DIME</original>
    <variation>AIMA</variation>
    <location>
        <begin position="261"/>
        <end position="264"/>
    </location>
</feature>
<feature type="mutagenesis site" description="Abolished interaction with MICU1." evidence="30">
    <original>D</original>
    <variation>A</variation>
    <variation>Q</variation>
    <location>
        <position position="261"/>
    </location>
</feature>
<feature type="mutagenesis site" description="Partially functional; does not completely abolish calcium channel activity. Does not affect interaction with MICU1." evidence="24 30">
    <original>D</original>
    <variation>E</variation>
    <location>
        <position position="261"/>
    </location>
</feature>
<feature type="mutagenesis site" description="Does not affect mitochondrial calcium uptake." evidence="28">
    <original>I</original>
    <variation>V</variation>
    <variation>A</variation>
    <location>
        <position position="262"/>
    </location>
</feature>
<feature type="mutagenesis site" description="Reduced but not abolished mitochondrial calcium uptake." evidence="28">
    <original>M</original>
    <variation>A</variation>
    <location>
        <position position="263"/>
    </location>
</feature>
<feature type="mutagenesis site" description="Does not affect interaction with MICU1." evidence="30">
    <original>E</original>
    <variation>A</variation>
    <location>
        <position position="264"/>
    </location>
</feature>
<feature type="mutagenesis site" description="Abolished mitochondrial calcium uptake." evidence="24 28">
    <original>E</original>
    <variation>D</variation>
    <location>
        <position position="264"/>
    </location>
</feature>
<feature type="mutagenesis site" description="Abolished mitochondrial calcium uptake." evidence="28">
    <original>P</original>
    <variation>A</variation>
    <variation>G</variation>
    <location>
        <position position="265"/>
    </location>
</feature>
<feature type="mutagenesis site" description="Reduced mitochondrial calcium uptake." evidence="27">
    <original>T</original>
    <variation>A</variation>
    <location>
        <position position="267"/>
    </location>
</feature>
<feature type="mutagenesis site" description="Reduced mitochondrial calcium uptake." evidence="27">
    <original>Y</original>
    <variation>A</variation>
    <location>
        <position position="268"/>
    </location>
</feature>
<feature type="mutagenesis site" description="Does not affect mitochondrial calcium uptake." evidence="27">
    <original>Y</original>
    <variation>F</variation>
    <location>
        <position position="268"/>
    </location>
</feature>
<feature type="mutagenesis site" description="Abolished gating by EMRE/SMDT1, leading to reduced mitochondrial calcium uptake." evidence="36">
    <original>R</original>
    <variation>Q</variation>
    <location>
        <position position="286"/>
    </location>
</feature>
<feature type="mutagenesis site" description="Abolished gating by EMRE/SMDT1, leading to reduced mitochondrial calcium uptake." evidence="36">
    <original>E</original>
    <variation>S</variation>
    <location>
        <position position="288"/>
    </location>
</feature>
<feature type="mutagenesis site" description="Abolished gating by EMRE/SMDT1, leading to reduced mitochondrial calcium uptake." evidence="36">
    <original>Y</original>
    <variation>F</variation>
    <location>
        <position position="289"/>
    </location>
</feature>
<feature type="mutagenesis site" description="Mitochondrial calcium uptake in the absence of EMRE/SMDT1." evidence="36">
    <original>Y</original>
    <variation>F</variation>
    <location>
        <position position="289"/>
    </location>
</feature>
<feature type="mutagenesis site" description="Abolished gating by EMRE/SMDT1, leading to reduced mitochondrial calcium uptake." evidence="36">
    <original>V</original>
    <variation>E</variation>
    <location>
        <position position="290"/>
    </location>
</feature>
<feature type="mutagenesis site" description="Does not affect gating by EMRE/SMDT1." evidence="36">
    <original>Y</original>
    <variation>F</variation>
    <variation>A</variation>
    <variation>T</variation>
    <variation>K</variation>
    <location>
        <position position="291"/>
    </location>
</feature>
<feature type="mutagenesis site" description="No effect." evidence="36">
    <original>A</original>
    <variation>C</variation>
    <variation>S</variation>
    <location>
        <position position="294"/>
    </location>
</feature>
<feature type="mutagenesis site" description="Mitochondrial calcium uptake in the absence of EMRE/SMDT1." evidence="36">
    <original>A</original>
    <variation>F</variation>
    <variation>L</variation>
    <location>
        <position position="294"/>
    </location>
</feature>
<feature type="mutagenesis site" description="Abolished mitochondrial calcium uptake even in the presence of EMRE/SMDT1." evidence="36">
    <original>A</original>
    <variation>N</variation>
    <variation>K</variation>
    <location>
        <position position="294"/>
    </location>
</feature>
<feature type="mutagenesis site" description="Decreased interaction with EMRE/SMDT1, leading to reduced calcium channel import." evidence="36">
    <original>R</original>
    <variation>A</variation>
    <variation>L</variation>
    <location>
        <position position="297"/>
    </location>
</feature>
<feature type="sequence conflict" description="In Ref. 1; BAG37900." evidence="43" ref="1">
    <original>S</original>
    <variation>P</variation>
    <location>
        <position position="107"/>
    </location>
</feature>
<feature type="sequence conflict" description="In Ref. 1; BAG37900." evidence="43" ref="1">
    <original>D</original>
    <variation>Y</variation>
    <location>
        <position position="142"/>
    </location>
</feature>
<feature type="strand" evidence="64">
    <location>
        <begin position="76"/>
        <end position="80"/>
    </location>
</feature>
<feature type="strand" evidence="64">
    <location>
        <begin position="83"/>
        <end position="88"/>
    </location>
</feature>
<feature type="strand" evidence="65">
    <location>
        <begin position="91"/>
        <end position="93"/>
    </location>
</feature>
<feature type="strand" evidence="64">
    <location>
        <begin position="97"/>
        <end position="100"/>
    </location>
</feature>
<feature type="turn" evidence="64">
    <location>
        <begin position="103"/>
        <end position="105"/>
    </location>
</feature>
<feature type="helix" evidence="64">
    <location>
        <begin position="108"/>
        <end position="118"/>
    </location>
</feature>
<feature type="strand" evidence="64">
    <location>
        <begin position="125"/>
        <end position="128"/>
    </location>
</feature>
<feature type="strand" evidence="65">
    <location>
        <begin position="137"/>
        <end position="140"/>
    </location>
</feature>
<feature type="helix" evidence="64">
    <location>
        <begin position="141"/>
        <end position="144"/>
    </location>
</feature>
<feature type="strand" evidence="64">
    <location>
        <begin position="149"/>
        <end position="153"/>
    </location>
</feature>
<feature type="strand" evidence="64">
    <location>
        <begin position="156"/>
        <end position="160"/>
    </location>
</feature>
<feature type="helix" evidence="64">
    <location>
        <begin position="168"/>
        <end position="172"/>
    </location>
</feature>
<feature type="helix" evidence="66">
    <location>
        <begin position="175"/>
        <end position="189"/>
    </location>
</feature>
<feature type="helix" evidence="66">
    <location>
        <begin position="192"/>
        <end position="199"/>
    </location>
</feature>
<feature type="helix" evidence="66">
    <location>
        <begin position="201"/>
        <end position="208"/>
    </location>
</feature>
<feature type="helix" evidence="66">
    <location>
        <begin position="210"/>
        <end position="213"/>
    </location>
</feature>
<feature type="helix" evidence="66">
    <location>
        <begin position="216"/>
        <end position="219"/>
    </location>
</feature>
<feature type="helix" evidence="66">
    <location>
        <begin position="221"/>
        <end position="240"/>
    </location>
</feature>
<feature type="helix" evidence="66">
    <location>
        <begin position="242"/>
        <end position="252"/>
    </location>
</feature>
<feature type="turn" evidence="66">
    <location>
        <begin position="253"/>
        <end position="255"/>
    </location>
</feature>
<feature type="strand" evidence="66">
    <location>
        <begin position="256"/>
        <end position="258"/>
    </location>
</feature>
<feature type="strand" evidence="66">
    <location>
        <begin position="260"/>
        <end position="262"/>
    </location>
</feature>
<feature type="helix" evidence="66">
    <location>
        <begin position="265"/>
        <end position="268"/>
    </location>
</feature>
<feature type="helix" evidence="66">
    <location>
        <begin position="271"/>
        <end position="274"/>
    </location>
</feature>
<feature type="turn" evidence="66">
    <location>
        <begin position="275"/>
        <end position="279"/>
    </location>
</feature>
<feature type="helix" evidence="66">
    <location>
        <begin position="280"/>
        <end position="285"/>
    </location>
</feature>
<feature type="helix" evidence="66">
    <location>
        <begin position="291"/>
        <end position="310"/>
    </location>
</feature>
<feature type="helix" evidence="66">
    <location>
        <begin position="314"/>
        <end position="329"/>
    </location>
</feature>
<feature type="helix" evidence="66">
    <location>
        <begin position="331"/>
        <end position="334"/>
    </location>
</feature>
<feature type="strand" evidence="66">
    <location>
        <begin position="337"/>
        <end position="339"/>
    </location>
</feature>
<proteinExistence type="evidence at protein level"/>
<gene>
    <name evidence="41 52" type="primary">MCU</name>
    <name evidence="52" type="synonym">C10orf42</name>
    <name evidence="52" type="synonym">CCDC109A</name>
</gene>
<reference key="1">
    <citation type="journal article" date="2004" name="Nat. Genet.">
        <title>Complete sequencing and characterization of 21,243 full-length human cDNAs.</title>
        <authorList>
            <person name="Ota T."/>
            <person name="Suzuki Y."/>
            <person name="Nishikawa T."/>
            <person name="Otsuki T."/>
            <person name="Sugiyama T."/>
            <person name="Irie R."/>
            <person name="Wakamatsu A."/>
            <person name="Hayashi K."/>
            <person name="Sato H."/>
            <person name="Nagai K."/>
            <person name="Kimura K."/>
            <person name="Makita H."/>
            <person name="Sekine M."/>
            <person name="Obayashi M."/>
            <person name="Nishi T."/>
            <person name="Shibahara T."/>
            <person name="Tanaka T."/>
            <person name="Ishii S."/>
            <person name="Yamamoto J."/>
            <person name="Saito K."/>
            <person name="Kawai Y."/>
            <person name="Isono Y."/>
            <person name="Nakamura Y."/>
            <person name="Nagahari K."/>
            <person name="Murakami K."/>
            <person name="Yasuda T."/>
            <person name="Iwayanagi T."/>
            <person name="Wagatsuma M."/>
            <person name="Shiratori A."/>
            <person name="Sudo H."/>
            <person name="Hosoiri T."/>
            <person name="Kaku Y."/>
            <person name="Kodaira H."/>
            <person name="Kondo H."/>
            <person name="Sugawara M."/>
            <person name="Takahashi M."/>
            <person name="Kanda K."/>
            <person name="Yokoi T."/>
            <person name="Furuya T."/>
            <person name="Kikkawa E."/>
            <person name="Omura Y."/>
            <person name="Abe K."/>
            <person name="Kamihara K."/>
            <person name="Katsuta N."/>
            <person name="Sato K."/>
            <person name="Tanikawa M."/>
            <person name="Yamazaki M."/>
            <person name="Ninomiya K."/>
            <person name="Ishibashi T."/>
            <person name="Yamashita H."/>
            <person name="Murakawa K."/>
            <person name="Fujimori K."/>
            <person name="Tanai H."/>
            <person name="Kimata M."/>
            <person name="Watanabe M."/>
            <person name="Hiraoka S."/>
            <person name="Chiba Y."/>
            <person name="Ishida S."/>
            <person name="Ono Y."/>
            <person name="Takiguchi S."/>
            <person name="Watanabe S."/>
            <person name="Yosida M."/>
            <person name="Hotuta T."/>
            <person name="Kusano J."/>
            <person name="Kanehori K."/>
            <person name="Takahashi-Fujii A."/>
            <person name="Hara H."/>
            <person name="Tanase T.-O."/>
            <person name="Nomura Y."/>
            <person name="Togiya S."/>
            <person name="Komai F."/>
            <person name="Hara R."/>
            <person name="Takeuchi K."/>
            <person name="Arita M."/>
            <person name="Imose N."/>
            <person name="Musashino K."/>
            <person name="Yuuki H."/>
            <person name="Oshima A."/>
            <person name="Sasaki N."/>
            <person name="Aotsuka S."/>
            <person name="Yoshikawa Y."/>
            <person name="Matsunawa H."/>
            <person name="Ichihara T."/>
            <person name="Shiohata N."/>
            <person name="Sano S."/>
            <person name="Moriya S."/>
            <person name="Momiyama H."/>
            <person name="Satoh N."/>
            <person name="Takami S."/>
            <person name="Terashima Y."/>
            <person name="Suzuki O."/>
            <person name="Nakagawa S."/>
            <person name="Senoh A."/>
            <person name="Mizoguchi H."/>
            <person name="Goto Y."/>
            <person name="Shimizu F."/>
            <person name="Wakebe H."/>
            <person name="Hishigaki H."/>
            <person name="Watanabe T."/>
            <person name="Sugiyama A."/>
            <person name="Takemoto M."/>
            <person name="Kawakami B."/>
            <person name="Yamazaki M."/>
            <person name="Watanabe K."/>
            <person name="Kumagai A."/>
            <person name="Itakura S."/>
            <person name="Fukuzumi Y."/>
            <person name="Fujimori Y."/>
            <person name="Komiyama M."/>
            <person name="Tashiro H."/>
            <person name="Tanigami A."/>
            <person name="Fujiwara T."/>
            <person name="Ono T."/>
            <person name="Yamada K."/>
            <person name="Fujii Y."/>
            <person name="Ozaki K."/>
            <person name="Hirao M."/>
            <person name="Ohmori Y."/>
            <person name="Kawabata A."/>
            <person name="Hikiji T."/>
            <person name="Kobatake N."/>
            <person name="Inagaki H."/>
            <person name="Ikema Y."/>
            <person name="Okamoto S."/>
            <person name="Okitani R."/>
            <person name="Kawakami T."/>
            <person name="Noguchi S."/>
            <person name="Itoh T."/>
            <person name="Shigeta K."/>
            <person name="Senba T."/>
            <person name="Matsumura K."/>
            <person name="Nakajima Y."/>
            <person name="Mizuno T."/>
            <person name="Morinaga M."/>
            <person name="Sasaki M."/>
            <person name="Togashi T."/>
            <person name="Oyama M."/>
            <person name="Hata H."/>
            <person name="Watanabe M."/>
            <person name="Komatsu T."/>
            <person name="Mizushima-Sugano J."/>
            <person name="Satoh T."/>
            <person name="Shirai Y."/>
            <person name="Takahashi Y."/>
            <person name="Nakagawa K."/>
            <person name="Okumura K."/>
            <person name="Nagase T."/>
            <person name="Nomura N."/>
            <person name="Kikuchi H."/>
            <person name="Masuho Y."/>
            <person name="Yamashita R."/>
            <person name="Nakai K."/>
            <person name="Yada T."/>
            <person name="Nakamura Y."/>
            <person name="Ohara O."/>
            <person name="Isogai T."/>
            <person name="Sugano S."/>
        </authorList>
    </citation>
    <scope>NUCLEOTIDE SEQUENCE [LARGE SCALE MRNA] (ISOFORMS 1 AND 3)</scope>
    <source>
        <tissue>Testis</tissue>
        <tissue>Tongue</tissue>
    </source>
</reference>
<reference key="2">
    <citation type="journal article" date="2004" name="Nature">
        <title>The DNA sequence and comparative analysis of human chromosome 10.</title>
        <authorList>
            <person name="Deloukas P."/>
            <person name="Earthrowl M.E."/>
            <person name="Grafham D.V."/>
            <person name="Rubenfield M."/>
            <person name="French L."/>
            <person name="Steward C.A."/>
            <person name="Sims S.K."/>
            <person name="Jones M.C."/>
            <person name="Searle S."/>
            <person name="Scott C."/>
            <person name="Howe K."/>
            <person name="Hunt S.E."/>
            <person name="Andrews T.D."/>
            <person name="Gilbert J.G.R."/>
            <person name="Swarbreck D."/>
            <person name="Ashurst J.L."/>
            <person name="Taylor A."/>
            <person name="Battles J."/>
            <person name="Bird C.P."/>
            <person name="Ainscough R."/>
            <person name="Almeida J.P."/>
            <person name="Ashwell R.I.S."/>
            <person name="Ambrose K.D."/>
            <person name="Babbage A.K."/>
            <person name="Bagguley C.L."/>
            <person name="Bailey J."/>
            <person name="Banerjee R."/>
            <person name="Bates K."/>
            <person name="Beasley H."/>
            <person name="Bray-Allen S."/>
            <person name="Brown A.J."/>
            <person name="Brown J.Y."/>
            <person name="Burford D.C."/>
            <person name="Burrill W."/>
            <person name="Burton J."/>
            <person name="Cahill P."/>
            <person name="Camire D."/>
            <person name="Carter N.P."/>
            <person name="Chapman J.C."/>
            <person name="Clark S.Y."/>
            <person name="Clarke G."/>
            <person name="Clee C.M."/>
            <person name="Clegg S."/>
            <person name="Corby N."/>
            <person name="Coulson A."/>
            <person name="Dhami P."/>
            <person name="Dutta I."/>
            <person name="Dunn M."/>
            <person name="Faulkner L."/>
            <person name="Frankish A."/>
            <person name="Frankland J.A."/>
            <person name="Garner P."/>
            <person name="Garnett J."/>
            <person name="Gribble S."/>
            <person name="Griffiths C."/>
            <person name="Grocock R."/>
            <person name="Gustafson E."/>
            <person name="Hammond S."/>
            <person name="Harley J.L."/>
            <person name="Hart E."/>
            <person name="Heath P.D."/>
            <person name="Ho T.P."/>
            <person name="Hopkins B."/>
            <person name="Horne J."/>
            <person name="Howden P.J."/>
            <person name="Huckle E."/>
            <person name="Hynds C."/>
            <person name="Johnson C."/>
            <person name="Johnson D."/>
            <person name="Kana A."/>
            <person name="Kay M."/>
            <person name="Kimberley A.M."/>
            <person name="Kershaw J.K."/>
            <person name="Kokkinaki M."/>
            <person name="Laird G.K."/>
            <person name="Lawlor S."/>
            <person name="Lee H.M."/>
            <person name="Leongamornlert D.A."/>
            <person name="Laird G."/>
            <person name="Lloyd C."/>
            <person name="Lloyd D.M."/>
            <person name="Loveland J."/>
            <person name="Lovell J."/>
            <person name="McLaren S."/>
            <person name="McLay K.E."/>
            <person name="McMurray A."/>
            <person name="Mashreghi-Mohammadi M."/>
            <person name="Matthews L."/>
            <person name="Milne S."/>
            <person name="Nickerson T."/>
            <person name="Nguyen M."/>
            <person name="Overton-Larty E."/>
            <person name="Palmer S.A."/>
            <person name="Pearce A.V."/>
            <person name="Peck A.I."/>
            <person name="Pelan S."/>
            <person name="Phillimore B."/>
            <person name="Porter K."/>
            <person name="Rice C.M."/>
            <person name="Rogosin A."/>
            <person name="Ross M.T."/>
            <person name="Sarafidou T."/>
            <person name="Sehra H.K."/>
            <person name="Shownkeen R."/>
            <person name="Skuce C.D."/>
            <person name="Smith M."/>
            <person name="Standring L."/>
            <person name="Sycamore N."/>
            <person name="Tester J."/>
            <person name="Thorpe A."/>
            <person name="Torcasso W."/>
            <person name="Tracey A."/>
            <person name="Tromans A."/>
            <person name="Tsolas J."/>
            <person name="Wall M."/>
            <person name="Walsh J."/>
            <person name="Wang H."/>
            <person name="Weinstock K."/>
            <person name="West A.P."/>
            <person name="Willey D.L."/>
            <person name="Whitehead S.L."/>
            <person name="Wilming L."/>
            <person name="Wray P.W."/>
            <person name="Young L."/>
            <person name="Chen Y."/>
            <person name="Lovering R.C."/>
            <person name="Moschonas N.K."/>
            <person name="Siebert R."/>
            <person name="Fechtel K."/>
            <person name="Bentley D."/>
            <person name="Durbin R.M."/>
            <person name="Hubbard T."/>
            <person name="Doucette-Stamm L."/>
            <person name="Beck S."/>
            <person name="Smith D.R."/>
            <person name="Rogers J."/>
        </authorList>
    </citation>
    <scope>NUCLEOTIDE SEQUENCE [LARGE SCALE GENOMIC DNA]</scope>
</reference>
<reference key="3">
    <citation type="submission" date="2005-07" db="EMBL/GenBank/DDBJ databases">
        <authorList>
            <person name="Mural R.J."/>
            <person name="Istrail S."/>
            <person name="Sutton G.G."/>
            <person name="Florea L."/>
            <person name="Halpern A.L."/>
            <person name="Mobarry C.M."/>
            <person name="Lippert R."/>
            <person name="Walenz B."/>
            <person name="Shatkay H."/>
            <person name="Dew I."/>
            <person name="Miller J.R."/>
            <person name="Flanigan M.J."/>
            <person name="Edwards N.J."/>
            <person name="Bolanos R."/>
            <person name="Fasulo D."/>
            <person name="Halldorsson B.V."/>
            <person name="Hannenhalli S."/>
            <person name="Turner R."/>
            <person name="Yooseph S."/>
            <person name="Lu F."/>
            <person name="Nusskern D.R."/>
            <person name="Shue B.C."/>
            <person name="Zheng X.H."/>
            <person name="Zhong F."/>
            <person name="Delcher A.L."/>
            <person name="Huson D.H."/>
            <person name="Kravitz S.A."/>
            <person name="Mouchard L."/>
            <person name="Reinert K."/>
            <person name="Remington K.A."/>
            <person name="Clark A.G."/>
            <person name="Waterman M.S."/>
            <person name="Eichler E.E."/>
            <person name="Adams M.D."/>
            <person name="Hunkapiller M.W."/>
            <person name="Myers E.W."/>
            <person name="Venter J.C."/>
        </authorList>
    </citation>
    <scope>NUCLEOTIDE SEQUENCE [LARGE SCALE GENOMIC DNA]</scope>
</reference>
<reference key="4">
    <citation type="journal article" date="2004" name="Genome Res.">
        <title>The status, quality, and expansion of the NIH full-length cDNA project: the Mammalian Gene Collection (MGC).</title>
        <authorList>
            <consortium name="The MGC Project Team"/>
        </authorList>
    </citation>
    <scope>NUCLEOTIDE SEQUENCE [LARGE SCALE MRNA] (ISOFORMS 1 AND 2)</scope>
    <source>
        <tissue>Eye</tissue>
        <tissue>Testis</tissue>
    </source>
</reference>
<reference key="5">
    <citation type="journal article" date="2011" name="BMC Syst. Biol.">
        <title>Initial characterization of the human central proteome.</title>
        <authorList>
            <person name="Burkard T.R."/>
            <person name="Planyavsky M."/>
            <person name="Kaupe I."/>
            <person name="Breitwieser F.P."/>
            <person name="Buerckstuemmer T."/>
            <person name="Bennett K.L."/>
            <person name="Superti-Furga G."/>
            <person name="Colinge J."/>
        </authorList>
    </citation>
    <scope>IDENTIFICATION BY MASS SPECTROMETRY [LARGE SCALE ANALYSIS]</scope>
</reference>
<reference key="6">
    <citation type="journal article" date="2011" name="Nature">
        <title>A forty-kilodalton protein of the inner membrane is the mitochondrial calcium uniporter.</title>
        <authorList>
            <person name="De Stefani D."/>
            <person name="Raffaello A."/>
            <person name="Teardo E."/>
            <person name="Szabo I."/>
            <person name="Rizzuto R."/>
        </authorList>
    </citation>
    <scope>FUNCTION</scope>
    <scope>MUTAGENESIS OF 261-ASP--GLU-264</scope>
    <scope>SUBCELLULAR LOCATION</scope>
    <scope>TISSUE SPECIFICITY</scope>
    <scope>TRANSPORTER ACTIVITY</scope>
</reference>
<reference key="7">
    <citation type="journal article" date="2011" name="Nature">
        <title>Integrative genomics identifies MCU as an essential component of the mitochondrial calcium uniporter.</title>
        <authorList>
            <person name="Baughman J.M."/>
            <person name="Perocchi F."/>
            <person name="Girgis H.S."/>
            <person name="Plovanich M."/>
            <person name="Belcher-Timme C.A."/>
            <person name="Sancak Y."/>
            <person name="Bao X.R."/>
            <person name="Strittmatter L."/>
            <person name="Goldberger O."/>
            <person name="Bogorad R.L."/>
            <person name="Koteliansky V."/>
            <person name="Mootha V.K."/>
        </authorList>
    </citation>
    <scope>FUNCTION</scope>
    <scope>MUTAGENESIS OF GLU-257; SER-259 AND 261-ASP--GLU-264</scope>
    <scope>SUBCELLULAR LOCATION</scope>
</reference>
<reference key="8">
    <citation type="journal article" date="2012" name="Cell">
        <title>MICU1 is an essential gatekeeper for MCU-mediated mitochondrial Ca(2+) uptake that regulates cell survival.</title>
        <authorList>
            <person name="Mallilankaraman K."/>
            <person name="Doonan P."/>
            <person name="Cardenas C."/>
            <person name="Chandramoorthy H.C."/>
            <person name="Muller M."/>
            <person name="Miller R."/>
            <person name="Hoffman N.E."/>
            <person name="Gandhirajan R.K."/>
            <person name="Molgo J."/>
            <person name="Birnbaum M.J."/>
            <person name="Rothberg B.S."/>
            <person name="Mak D.O."/>
            <person name="Foskett J.K."/>
            <person name="Madesh M."/>
        </authorList>
    </citation>
    <scope>FUNCTION</scope>
</reference>
<reference key="9">
    <citation type="journal article" date="2012" name="J. Biol. Chem.">
        <title>Mitochondrial Ca2+ uptake 1 (MICU1) and mitochondrial ca2+ uniporter (MCU) contribute to metabolism-secretion coupling in clonal pancreatic beta-cells.</title>
        <authorList>
            <person name="Alam M.R."/>
            <person name="Groschner L.N."/>
            <person name="Parichatikanond W."/>
            <person name="Kuo L."/>
            <person name="Bondarenko A.I."/>
            <person name="Rost R."/>
            <person name="Waldeck-Weiermair M."/>
            <person name="Malli R."/>
            <person name="Graier W.F."/>
        </authorList>
    </citation>
    <scope>FUNCTION</scope>
</reference>
<reference key="10">
    <citation type="journal article" date="2012" name="Nature">
        <title>CaMKII determines mitochondrial stress responses in heart.</title>
        <authorList>
            <person name="Joiner M.L."/>
            <person name="Koval O.M."/>
            <person name="Li J."/>
            <person name="He B.J."/>
            <person name="Allamargot C."/>
            <person name="Gao Z."/>
            <person name="Luczak E.D."/>
            <person name="Hall D.D."/>
            <person name="Fink B.D."/>
            <person name="Chen B."/>
            <person name="Yang J."/>
            <person name="Moore S.A."/>
            <person name="Scholz T.D."/>
            <person name="Strack S."/>
            <person name="Mohler P.J."/>
            <person name="Sivitz W.I."/>
            <person name="Song L.S."/>
            <person name="Anderson M.E."/>
        </authorList>
    </citation>
    <scope>PHOSPHORYLATION AT SER-57 AND SER-92</scope>
    <scope>MUTAGENESIS OF SER-57 AND SER-92</scope>
</reference>
<reference key="11">
    <citation type="journal article" date="2012" name="Nat. Cell Biol.">
        <title>MCUR1 is an essential component of mitochondrial Ca(2+) uptake that regulates cellular metabolism.</title>
        <authorList>
            <person name="Mallilankaraman K."/>
            <person name="Cardenas C."/>
            <person name="Doonan P.J."/>
            <person name="Chandramoorthy H.C."/>
            <person name="Irrinki K.M."/>
            <person name="Golenar T."/>
            <person name="Csordas G."/>
            <person name="Madireddi P."/>
            <person name="Yang J."/>
            <person name="Muller M."/>
            <person name="Miller R."/>
            <person name="Kolesar J.E."/>
            <person name="Molgo J."/>
            <person name="Kaufman B."/>
            <person name="Hajnoczky G."/>
            <person name="Foskett J.K."/>
            <person name="Madesh M."/>
        </authorList>
    </citation>
    <scope>FUNCTION</scope>
    <scope>INTERACTION WITH MCUR1</scope>
</reference>
<reference key="12">
    <citation type="journal article" date="2012" name="PLoS ONE">
        <title>The mitochondrial Ca2+ uniporter MCU is essential for glucose-induced ATP increases in pancreatic beta-cells.</title>
        <authorList>
            <person name="Tarasov A.I."/>
            <person name="Semplici F."/>
            <person name="Ravier M.A."/>
            <person name="Bellomo E.A."/>
            <person name="Pullen T.J."/>
            <person name="Gilon P."/>
            <person name="Sekler I."/>
            <person name="Rizzuto R."/>
            <person name="Rutter G.A."/>
        </authorList>
    </citation>
    <scope>FUNCTION</scope>
</reference>
<reference key="13">
    <citation type="journal article" date="2012" name="Proc. Natl. Acad. Sci. U.S.A.">
        <title>Mitochondrial Ca2+ uptake contributes to buffering cytoplasmic Ca2+ peaks in cardiomyocytes.</title>
        <authorList>
            <person name="Drago I."/>
            <person name="De Stefani D."/>
            <person name="Rizzuto R."/>
            <person name="Pozzan T."/>
        </authorList>
    </citation>
    <scope>FUNCTION</scope>
</reference>
<reference key="14">
    <citation type="journal article" date="2012" name="Science">
        <title>Evolutionary diversity of the mitochondrial calcium uniporter.</title>
        <authorList>
            <person name="Bick A.G."/>
            <person name="Calvo S.E."/>
            <person name="Mootha V.K."/>
        </authorList>
    </citation>
    <scope>IDENTIFICATION</scope>
</reference>
<reference key="15">
    <citation type="journal article" date="2013" name="Cell Rep.">
        <title>MICU1 motifs define mitochondrial calcium uniporter binding and activity.</title>
        <authorList>
            <person name="Hoffman N.E."/>
            <person name="Chandramoorthy H.C."/>
            <person name="Shamugapriya S."/>
            <person name="Zhang X."/>
            <person name="Rajan S."/>
            <person name="Mallilankaraman K."/>
            <person name="Gandhirajan R.K."/>
            <person name="Vagnozzi R.J."/>
            <person name="Ferrer L.M."/>
            <person name="Sreekrishnanilayam K."/>
            <person name="Natarajaseenivasan K."/>
            <person name="Vallem S."/>
            <person name="Force T."/>
            <person name="Choi E.T."/>
            <person name="Cheung J.Y."/>
            <person name="Madesh M."/>
        </authorList>
    </citation>
    <scope>FUNCTION</scope>
</reference>
<reference key="16">
    <citation type="journal article" date="2013" name="Curr. Biol.">
        <title>Downregulation of the mitochondrial calcium uniporter by cancer-related miR-25.</title>
        <authorList>
            <person name="Marchi S."/>
            <person name="Lupini L."/>
            <person name="Patergnani S."/>
            <person name="Rimessi A."/>
            <person name="Missiroli S."/>
            <person name="Bonora M."/>
            <person name="Bononi A."/>
            <person name="Corra F."/>
            <person name="Giorgi C."/>
            <person name="De Marchi E."/>
            <person name="Poletti F."/>
            <person name="Gafa R."/>
            <person name="Lanza G."/>
            <person name="Negrini M."/>
            <person name="Rizzuto R."/>
            <person name="Pinton P."/>
        </authorList>
    </citation>
    <scope>INDUCTION</scope>
</reference>
<reference key="17">
    <citation type="journal article" date="2013" name="Elife">
        <title>MCU encodes the pore conducting mitochondrial calcium currents.</title>
        <authorList>
            <person name="Chaudhuri D."/>
            <person name="Sancak Y."/>
            <person name="Mootha V.K."/>
            <person name="Clapham D.E."/>
        </authorList>
    </citation>
    <scope>FUNCTION</scope>
    <scope>ACTIVITY REGULATION</scope>
    <scope>SUBCELLULAR LOCATION</scope>
    <scope>MUTAGENESIS OF SER-259</scope>
</reference>
<reference key="18">
    <citation type="journal article" date="2013" name="Science">
        <title>EMRE is an essential component of the mitochondrial calcium uniporter complex.</title>
        <authorList>
            <person name="Sancak Y."/>
            <person name="Markhard A.L."/>
            <person name="Kitami T."/>
            <person name="Kovacs-Bogdan E."/>
            <person name="Kamer K.J."/>
            <person name="Udeshi N.D."/>
            <person name="Carr S.A."/>
            <person name="Chaudhuri D."/>
            <person name="Clapham D.E."/>
            <person name="Li A.A."/>
            <person name="Calvo S.E."/>
            <person name="Goldberger O."/>
            <person name="Mootha V.K."/>
        </authorList>
    </citation>
    <scope>SUBCELLULAR LOCATION</scope>
    <scope>IDENTIFICATION IN THE UNIPLEX COMPLEX</scope>
</reference>
<reference key="19">
    <citation type="journal article" date="2014" name="Antioxid. Redox Signal.">
        <title>Adrenergic signaling regulates mitochondrial Ca2+ uptake through Pyk2-dependent tyrosine phosphorylation of the mitochondrial Ca2+ uniporter.</title>
        <authorList>
            <person name="O-Uchi J."/>
            <person name="Jhun B.S."/>
            <person name="Xu S."/>
            <person name="Hurst S."/>
            <person name="Raffaello A."/>
            <person name="Liu X."/>
            <person name="Yi B."/>
            <person name="Zhang H."/>
            <person name="Gross P."/>
            <person name="Mishra J."/>
            <person name="Ainbinder A."/>
            <person name="Kettlewell S."/>
            <person name="Smith G.L."/>
            <person name="Dirksen R.T."/>
            <person name="Wang W."/>
            <person name="Rizzuto R."/>
            <person name="Sheu S.S."/>
        </authorList>
    </citation>
    <scope>PHOSPHORYLATION</scope>
</reference>
<reference key="20">
    <citation type="journal article" date="2014" name="Mol. Biol. Cell">
        <title>SLC25A23 augments mitochondrial Ca(2+) uptake, interacts with MCU, and induces oxidative stress-mediated cell death.</title>
        <authorList>
            <person name="Hoffman N.E."/>
            <person name="Chandramoorthy H.C."/>
            <person name="Shanmughapriya S."/>
            <person name="Zhang X.Q."/>
            <person name="Vallem S."/>
            <person name="Doonan P.J."/>
            <person name="Malliankaraman K."/>
            <person name="Guo S."/>
            <person name="Rajan S."/>
            <person name="Elrod J.W."/>
            <person name="Koch W.J."/>
            <person name="Cheung J.Y."/>
            <person name="Madesh M."/>
        </authorList>
    </citation>
    <scope>INTERACTION WITH SLC25A23</scope>
</reference>
<reference key="21">
    <citation type="journal article" date="2014" name="Mol. Cell">
        <title>MICU1 and MICU2 finely tune the mitochondrial Ca(2+) uniporter by exerting opposite effects on MCU activity.</title>
        <authorList>
            <person name="Patron M."/>
            <person name="Checchetto V."/>
            <person name="Raffaello A."/>
            <person name="Teardo E."/>
            <person name="Vecellio Reane D."/>
            <person name="Mantoan M."/>
            <person name="Granatiero V."/>
            <person name="Szabo I."/>
            <person name="De Stefani D."/>
            <person name="Rizzuto R."/>
        </authorList>
    </citation>
    <scope>FUNCTION</scope>
    <scope>TRANSPORTER ACTIVITY</scope>
    <scope>ACTIVITY REGULATION</scope>
</reference>
<reference key="22">
    <citation type="journal article" date="2014" name="Nature">
        <title>Mitochondrial Ca2+ uniporter and CaMKII in heart.</title>
        <authorList>
            <person name="Fieni F."/>
            <person name="Johnson D.E."/>
            <person name="Hudmon A."/>
            <person name="Kirichok Y."/>
        </authorList>
    </citation>
    <scope>COMMENT ON PUBMED:23051746 RESULTS</scope>
</reference>
<reference key="23">
    <citation type="journal article" date="2014" name="Nature">
        <title>Joiner et al. reply.</title>
        <authorList>
            <person name="Joiner M.L."/>
            <person name="Koval O.M."/>
            <person name="Li J."/>
            <person name="He B.J."/>
            <person name="Allamargot C."/>
            <person name="Gao Z."/>
            <person name="Luczak E.D."/>
            <person name="Hall D.D."/>
            <person name="Fink B.D."/>
            <person name="Chen B."/>
            <person name="Yang J."/>
            <person name="Moore S.A."/>
            <person name="Scholz T.D."/>
            <person name="Strack S."/>
            <person name="Mohler P.J."/>
            <person name="Sivitz W.I."/>
            <person name="Song L.S."/>
            <person name="Anderson M.E."/>
        </authorList>
    </citation>
    <scope>COMMENT ON PUBMED:25254480 RESULTS</scope>
</reference>
<reference key="24">
    <citation type="journal article" date="2015" name="Int. J. Mol. Sci.">
        <title>MiR-25 protects cardiomyocytes against oxidative damage by targeting the mitochondrial calcium uniporter.</title>
        <authorList>
            <person name="Pan L."/>
            <person name="Huang B.J."/>
            <person name="Ma X.E."/>
            <person name="Wang S.Y."/>
            <person name="Feng J."/>
            <person name="Lv F."/>
            <person name="Liu Y."/>
            <person name="Liu Y."/>
            <person name="Li C.M."/>
            <person name="Liang D.D."/>
            <person name="Li J."/>
            <person name="Xu L."/>
            <person name="Chen Y.H."/>
        </authorList>
    </citation>
    <scope>INDUCTION</scope>
</reference>
<reference key="25">
    <citation type="journal article" date="2015" name="Nat. Commun.">
        <title>The mitochondrial uniporter controls fight or flight heart rate increases.</title>
        <authorList>
            <person name="Wu Y."/>
            <person name="Rasmussen T.P."/>
            <person name="Koval O.M."/>
            <person name="Joiner M.L."/>
            <person name="Hall D.D."/>
            <person name="Chen B."/>
            <person name="Luczak E.D."/>
            <person name="Wang Q."/>
            <person name="Rokita A.G."/>
            <person name="Wehrens X.H."/>
            <person name="Song L.S."/>
            <person name="Anderson M.E."/>
        </authorList>
    </citation>
    <scope>FUNCTION</scope>
    <scope>MUTAGENESIS OF 261-ASP--GLU-264</scope>
</reference>
<reference key="26">
    <citation type="journal article" date="2015" name="Proteomics">
        <title>N-terminome analysis of the human mitochondrial proteome.</title>
        <authorList>
            <person name="Vaca Jacome A.S."/>
            <person name="Rabilloud T."/>
            <person name="Schaeffer-Reiss C."/>
            <person name="Rompais M."/>
            <person name="Ayoub D."/>
            <person name="Lane L."/>
            <person name="Bairoch A."/>
            <person name="Van Dorsselaer A."/>
            <person name="Carapito C."/>
        </authorList>
    </citation>
    <scope>IDENTIFICATION BY MASS SPECTROMETRY [LARGE SCALE ANALYSIS]</scope>
</reference>
<reference key="27">
    <citation type="journal article" date="2016" name="Biochim. Biophys. Acta">
        <title>Functional roles of MICU1 and MICU2 in mitochondrial Ca(2+) uptake.</title>
        <authorList>
            <person name="Matesanz-Isabel J."/>
            <person name="Arias-Del-Val J."/>
            <person name="Alvarez-Illera P."/>
            <person name="Fonteriz R.I."/>
            <person name="Montero M."/>
            <person name="Alvarez J."/>
        </authorList>
    </citation>
    <scope>FUNCTION</scope>
    <scope>ACTIVITY REGULATION</scope>
</reference>
<reference key="28">
    <citation type="journal article" date="2016" name="Cell Rep.">
        <title>MCUR1 is a scaffold factor for the MCU complex function and promotes mitochondrial bioenergetics.</title>
        <authorList>
            <person name="Tomar D."/>
            <person name="Dong Z."/>
            <person name="Shanmughapriya S."/>
            <person name="Koch D.A."/>
            <person name="Thomas T."/>
            <person name="Hoffman N.E."/>
            <person name="Timbalia S.A."/>
            <person name="Goldman S.J."/>
            <person name="Breves S.L."/>
            <person name="Corbally D.P."/>
            <person name="Nemani N."/>
            <person name="Fairweather J.P."/>
            <person name="Cutri A.R."/>
            <person name="Zhang X."/>
            <person name="Song J."/>
            <person name="Jana F."/>
            <person name="Huang J."/>
            <person name="Barrero C."/>
            <person name="Rabinowitz J.E."/>
            <person name="Luongo T.S."/>
            <person name="Schumacher S.M."/>
            <person name="Rockman M.E."/>
            <person name="Dietrich A."/>
            <person name="Merali S."/>
            <person name="Caplan J."/>
            <person name="Stathopulos P."/>
            <person name="Ahima R.S."/>
            <person name="Cheung J.Y."/>
            <person name="Houser S.R."/>
            <person name="Koch W.J."/>
            <person name="Patel V."/>
            <person name="Gohil V.M."/>
            <person name="Elrod J.W."/>
            <person name="Rajan S."/>
            <person name="Madesh M."/>
        </authorList>
    </citation>
    <scope>INTERACTION WITH MCUR1 AND CCDC90B</scope>
</reference>
<reference key="29">
    <citation type="journal article" date="2016" name="Elife">
        <title>Dual functions of a small regulatory subunit in the mitochondrial calcium uniporter complex.</title>
        <authorList>
            <person name="Tsai M.F."/>
            <person name="Phillips C.B."/>
            <person name="Ranaghan M."/>
            <person name="Tsai C.W."/>
            <person name="Wu Y."/>
            <person name="Willliams C."/>
            <person name="Miller C."/>
        </authorList>
    </citation>
    <scope>FUNCTION</scope>
    <scope>TOPOLOGY</scope>
</reference>
<reference key="30">
    <citation type="journal article" date="2016" name="Nature">
        <title>Architecture of the mitochondrial calcium uniporter.</title>
        <authorList>
            <person name="Oxenoid K."/>
            <person name="Dong Y."/>
            <person name="Cao C."/>
            <person name="Cui T."/>
            <person name="Sancak Y."/>
            <person name="Markhard A.L."/>
            <person name="Grabarek Z."/>
            <person name="Kong L."/>
            <person name="Liu Z."/>
            <person name="Ouyang B."/>
            <person name="Cong Y."/>
            <person name="Mootha V.K."/>
            <person name="Chou J.J."/>
        </authorList>
    </citation>
    <scope>MUTAGENESIS OF GLU-257; SER-259; ASP-261 AND GLU-264</scope>
</reference>
<reference key="31">
    <citation type="journal article" date="2016" name="Proc. Natl. Acad. Sci. U.S.A.">
        <title>Mitochondrial calcium uniporter regulator 1 (MCUR1) regulates the calcium threshold for the mitochondrial permeability transition.</title>
        <authorList>
            <person name="Chaudhuri D."/>
            <person name="Artiga D.J."/>
            <person name="Abiria S.A."/>
            <person name="Clapham D.E."/>
        </authorList>
    </citation>
    <scope>INTERACTION WITH MCUR1</scope>
</reference>
<reference key="32">
    <citation type="journal article" date="2017" name="Mol. Cell">
        <title>Mitochondrial Ca2+ uniporter is a mitochondrial luminal redox sensor that augments MCU channel activity.</title>
        <authorList>
            <person name="Dong Z."/>
            <person name="Shanmughapriya S."/>
            <person name="Tomar D."/>
            <person name="Siddiqui N."/>
            <person name="Lynch S."/>
            <person name="Nemani N."/>
            <person name="Breves S.L."/>
            <person name="Zhang X."/>
            <person name="Tripathi A."/>
            <person name="Palaniappan P."/>
            <person name="Riitano M.F."/>
            <person name="Worth A.M."/>
            <person name="Seelam A."/>
            <person name="Carvalho E."/>
            <person name="Subbiah R."/>
            <person name="Jana F."/>
            <person name="Soboloff J."/>
            <person name="Peng Y."/>
            <person name="Cheung J.Y."/>
            <person name="Joseph S.K."/>
            <person name="Caplan J."/>
            <person name="Rajan S."/>
            <person name="Stathopulos P.B."/>
            <person name="Madesh M."/>
        </authorList>
    </citation>
    <scope>GLUTATHIONYLATION AT CYS-97</scope>
    <scope>MUTAGENESIS OF CYS-66; CYS-97 AND CYS-191</scope>
</reference>
<reference key="33">
    <citation type="journal article" date="2018" name="Science">
        <title>Cryo-EM structure of a mitochondrial calcium uniporter.</title>
        <authorList>
            <person name="Yoo J."/>
            <person name="Wu M."/>
            <person name="Yin Y."/>
            <person name="Herzik M.A. Jr."/>
            <person name="Lander G.C."/>
            <person name="Lee S.Y."/>
        </authorList>
    </citation>
    <scope>FUNCTION</scope>
    <scope>TRANSPORTER ACTIVITY</scope>
    <scope>MUTAGENESIS OF TRP-260; THR-267 AND TYR-268</scope>
</reference>
<reference key="34">
    <citation type="journal article" date="2018" name="Mol. Cell">
        <title>MICU1 Interacts with the D-Ring of the MCU Pore to Control Its Ca2+ Flux and Sensitivity to Ru360.</title>
        <authorList>
            <person name="Paillard M."/>
            <person name="Csordas G."/>
            <person name="Huang K.T."/>
            <person name="Varnai P."/>
            <person name="Joseph S.K."/>
            <person name="Hajnoczky G."/>
        </authorList>
    </citation>
    <scope>FUNCTION</scope>
</reference>
<reference key="35">
    <citation type="journal article" date="2018" name="Nature">
        <title>Cryo-EM structures of fungal and metazoan mitochondrial calcium uniporters.</title>
        <authorList>
            <person name="Baradaran R."/>
            <person name="Wang C."/>
            <person name="Siliciano A.F."/>
            <person name="Long S.B."/>
        </authorList>
    </citation>
    <scope>FUNCTION</scope>
    <scope>TRANSPORTER ACTIVITY</scope>
    <scope>MUTAGENESIS OF TRP-260; ILE-262; MET-263; GLU-264 AND PRO-265</scope>
</reference>
<reference key="36">
    <citation type="journal article" date="2019" name="Elife">
        <title>The conserved aspartate ring of MCU mediates MICU1 binding and regulation in the mitochondrial calcium uniporter complex.</title>
        <authorList>
            <person name="Phillips C.B."/>
            <person name="Tsai C.W."/>
            <person name="Tsai M.F."/>
        </authorList>
    </citation>
    <scope>FUNCTION</scope>
    <scope>TRANSPORTER ACTIVITY</scope>
    <scope>MUTAGENESIS OF SER-259; ASP-261 AND GLU-264</scope>
</reference>
<reference key="37">
    <citation type="journal article" date="2019" name="J. Biol. Chem.">
        <title>SPG7 targets the m-AAA protease complex to process MCU for uniporter assembly, Ca2+ influx, and regulation of mitochondrial permeability transition pore opening.</title>
        <authorList>
            <person name="Hurst S."/>
            <person name="Baggett A."/>
            <person name="Csordas G."/>
            <person name="Sheu S.S."/>
        </authorList>
    </citation>
    <scope>PROTEOLYTIC CLEAVAGE</scope>
</reference>
<reference key="38">
    <citation type="journal article" date="2020" name="Cell Rep.">
        <title>Mechanisms of EMRE-dependent MCU opening in the mitochondrial calcium uniporter complex.</title>
        <authorList>
            <person name="Van Keuren A.M."/>
            <person name="Tsai C.W."/>
            <person name="Balderas E."/>
            <person name="Rodriguez M.X."/>
            <person name="Chaudhuri D."/>
            <person name="Tsai M.F."/>
        </authorList>
    </citation>
    <scope>FUNCTION</scope>
    <scope>TRANSPORTER ACTIVITY</scope>
    <scope>ACTIVITY REGULATION</scope>
    <scope>MUTAGENESIS OF LEU-240; ALA-241; GLY-248; ARG-286; GLU-288; TYR-289; VAL-290; TYR-291; ALA-294 AND ARG-297</scope>
</reference>
<reference key="39">
    <citation type="journal article" date="2023" name="Proc. Natl. Acad. Sci. U.S.A.">
        <title>Evidence supporting the MICU1 occlusion mechanism and against the potentiation model in the mitochondrial calcium uniporter complex.</title>
        <authorList>
            <person name="Tsai C.W."/>
            <person name="Liu T.Y."/>
            <person name="Chao F.Y."/>
            <person name="Tu Y.C."/>
            <person name="Rodriguez M.X."/>
            <person name="Van Keuren A.M."/>
            <person name="Ma Z."/>
            <person name="Bankston J."/>
            <person name="Tsai M.F."/>
        </authorList>
    </citation>
    <scope>FUNCTION</scope>
    <scope>ACTIVITY REGULATION</scope>
</reference>
<reference key="40">
    <citation type="journal article" date="2023" name="Proc. Natl. Acad. Sci. U.S.A.">
        <title>MICU1 occludes the mitochondrial calcium uniporter in divalent-free conditions.</title>
        <authorList>
            <person name="Rodriguez-Prados M."/>
            <person name="Berezhnaya E."/>
            <person name="Castromonte M.T."/>
            <person name="Menezes-Filho S.L."/>
            <person name="Paillard M."/>
            <person name="Hajnoczky G."/>
        </authorList>
    </citation>
    <scope>FUNCTION</scope>
    <scope>ACTIVITY REGULATION</scope>
</reference>
<reference evidence="53 54 55" key="41">
    <citation type="journal article" date="2015" name="EMBO Rep.">
        <title>Structure and function of the N-terminal domain of the human mitochondrial calcium uniporter.</title>
        <authorList>
            <person name="Lee Y."/>
            <person name="Min C.K."/>
            <person name="Kim T.G."/>
            <person name="Song H.K."/>
            <person name="Lim Y."/>
            <person name="Kim D."/>
            <person name="Shin K."/>
            <person name="Kang M."/>
            <person name="Kang J.Y."/>
            <person name="Youn H.S."/>
            <person name="Lee J.G."/>
            <person name="An J.Y."/>
            <person name="Park K.R."/>
            <person name="Lim J.J."/>
            <person name="Kim J.H."/>
            <person name="Kim J.H."/>
            <person name="Park Z.Y."/>
            <person name="Kim Y.S."/>
            <person name="Wang J."/>
            <person name="Kim D.H."/>
            <person name="Eom S.H."/>
        </authorList>
    </citation>
    <scope>X-RAY CRYSTALLOGRAPHY (1.50 ANGSTROMS) OF 75-185</scope>
    <scope>FUNCTION</scope>
    <scope>SUBUNIT</scope>
    <scope>INTERACTION WITH MCUR1; MICU1 AND MICU2</scope>
    <scope>SUBCELLULAR LOCATION</scope>
    <scope>MUTAGENESIS OF SER-92 AND LYS-180</scope>
    <scope>DOMAIN</scope>
</reference>
<reference evidence="58 59" key="42">
    <citation type="journal article" date="2019" name="Cell">
        <title>Structural mechanism of EMRE-dependent gating of the human mitochondrial calcium uniporter.</title>
        <authorList>
            <person name="Wang Y."/>
            <person name="Nguyen N.X."/>
            <person name="She J."/>
            <person name="Zeng W."/>
            <person name="Yang Y."/>
            <person name="Bai X.C."/>
            <person name="Jiang Y."/>
        </authorList>
    </citation>
    <scope>STRUCTURE BY ELECTRON MICROSCOPY (3.60 ANGSTROMS) IN COMPLEX WITH SMDT1</scope>
    <scope>FUNCTION</scope>
    <scope>TRANSPORTER ACTIVITY</scope>
    <scope>ACTIVITY REGULATION</scope>
    <scope>SUBCELLULAR LOCATION</scope>
    <scope>TOPOLOGY</scope>
    <scope>IDENTIFICATION IN THE UNIPLEX COMPLEX</scope>
    <scope>MUTAGENESIS OF ASP-123</scope>
</reference>
<reference evidence="62 63" key="43">
    <citation type="journal article" date="2020" name="Elife">
        <title>Structural insights into the Ca2+-dependent gating of the human mitochondrial calcium uniporter.</title>
        <authorList>
            <person name="Wang Y."/>
            <person name="Han Y."/>
            <person name="She J."/>
            <person name="Nguyen N.X."/>
            <person name="Mootha V.K."/>
            <person name="Bai X.C."/>
            <person name="Jiang Y."/>
        </authorList>
    </citation>
    <scope>STRUCTURE BY ELECTRON MICROSCOPY (4.17 ANGSTROMS) OF THE UNIPLEX COMPLEX</scope>
    <scope>FUNCTION</scope>
    <scope>ACTIVITY REGULATION</scope>
    <scope>IDENTIFICATION IN THE UNIPLEX COMPLEX</scope>
    <scope>SUBCELLULAR LOCATION</scope>
</reference>
<reference evidence="60 61" key="44">
    <citation type="journal article" date="2020" name="Nature">
        <title>Structure and mechanism of the mitochondrial Ca2+ uniporter holocomplex.</title>
        <authorList>
            <person name="Fan M."/>
            <person name="Zhang J."/>
            <person name="Tsai C.W."/>
            <person name="Orlando B.J."/>
            <person name="Rodriguez M."/>
            <person name="Xu Y."/>
            <person name="Liao M."/>
            <person name="Tsai M.F."/>
            <person name="Feng L."/>
        </authorList>
    </citation>
    <scope>STRUCTURE BY ELECTRON MICROSCOPY (3.20 ANGSTROMS) OF 169-346 OF THE UNIPLEX COMPLEX</scope>
    <scope>FUNCTION</scope>
    <scope>TRANSPORTER ACTIVITY</scope>
    <scope>ACTIVITY REGULATION</scope>
    <scope>IDENTIFICATION IN THE UNIPLEX COMPLEX</scope>
    <scope>SUBCELLULAR LOCATION</scope>
    <scope>DOMAIN</scope>
    <scope>MUTAGENESIS OF ASP-123</scope>
</reference>
<reference evidence="56 57" key="45">
    <citation type="journal article" date="2021" name="Protein Cell">
        <title>Structure of intact human MCU supercomplex with the auxiliary MICU subunits.</title>
        <authorList>
            <person name="Zhuo W."/>
            <person name="Zhou H."/>
            <person name="Guo R."/>
            <person name="Yi J."/>
            <person name="Zhang L."/>
            <person name="Yu L."/>
            <person name="Sui Y."/>
            <person name="Zeng W."/>
            <person name="Wang P."/>
            <person name="Yang M."/>
        </authorList>
    </citation>
    <scope>STRUCTURE BY ELECTRON MICROSCOPY (3.27 ANGSTROMS) OF 73-348 OF THE UNIPLEX COMPLEX</scope>
    <scope>SUBCELLULAR LOCATION</scope>
    <scope>IDENTIFICATION IN THE UNIPLEX COMPLEX</scope>
</reference>
<protein>
    <recommendedName>
        <fullName evidence="41">Calcium uniporter protein, mitochondrial</fullName>
        <shortName evidence="42">HsMCU</shortName>
    </recommendedName>
    <alternativeName>
        <fullName evidence="43">Coiled-coil domain-containing protein 109A</fullName>
    </alternativeName>
</protein>
<dbReference type="EMBL" id="AK315519">
    <property type="protein sequence ID" value="BAG37900.1"/>
    <property type="molecule type" value="mRNA"/>
</dbReference>
<dbReference type="EMBL" id="AK128016">
    <property type="protein sequence ID" value="BAG54619.1"/>
    <property type="molecule type" value="mRNA"/>
</dbReference>
<dbReference type="EMBL" id="AC016542">
    <property type="status" value="NOT_ANNOTATED_CDS"/>
    <property type="molecule type" value="Genomic_DNA"/>
</dbReference>
<dbReference type="EMBL" id="AC069548">
    <property type="status" value="NOT_ANNOTATED_CDS"/>
    <property type="molecule type" value="Genomic_DNA"/>
</dbReference>
<dbReference type="EMBL" id="CH471083">
    <property type="protein sequence ID" value="EAW54461.1"/>
    <property type="molecule type" value="Genomic_DNA"/>
</dbReference>
<dbReference type="EMBL" id="BC010682">
    <property type="protein sequence ID" value="AAH10682.1"/>
    <property type="molecule type" value="mRNA"/>
</dbReference>
<dbReference type="EMBL" id="BC034235">
    <property type="protein sequence ID" value="AAH34235.1"/>
    <property type="molecule type" value="mRNA"/>
</dbReference>
<dbReference type="CCDS" id="CCDS59218.1">
    <molecule id="Q8NE86-2"/>
</dbReference>
<dbReference type="CCDS" id="CCDS59219.1">
    <molecule id="Q8NE86-3"/>
</dbReference>
<dbReference type="CCDS" id="CCDS7317.1">
    <molecule id="Q8NE86-1"/>
</dbReference>
<dbReference type="RefSeq" id="NP_001257608.1">
    <molecule id="Q8NE86-2"/>
    <property type="nucleotide sequence ID" value="NM_001270679.2"/>
</dbReference>
<dbReference type="RefSeq" id="NP_001257609.1">
    <molecule id="Q8NE86-3"/>
    <property type="nucleotide sequence ID" value="NM_001270680.3"/>
</dbReference>
<dbReference type="RefSeq" id="NP_612366.1">
    <molecule id="Q8NE86-1"/>
    <property type="nucleotide sequence ID" value="NM_138357.3"/>
</dbReference>
<dbReference type="PDB" id="4XSJ">
    <property type="method" value="X-ray"/>
    <property type="resolution" value="1.80 A"/>
    <property type="chains" value="A=75-165"/>
</dbReference>
<dbReference type="PDB" id="4XTB">
    <property type="method" value="X-ray"/>
    <property type="resolution" value="1.50 A"/>
    <property type="chains" value="A=75-185"/>
</dbReference>
<dbReference type="PDB" id="5BZ6">
    <property type="method" value="X-ray"/>
    <property type="resolution" value="2.75 A"/>
    <property type="chains" value="A=75-165"/>
</dbReference>
<dbReference type="PDB" id="5KUE">
    <property type="method" value="X-ray"/>
    <property type="resolution" value="1.50 A"/>
    <property type="chains" value="A=72-189"/>
</dbReference>
<dbReference type="PDB" id="5KUG">
    <property type="method" value="X-ray"/>
    <property type="resolution" value="1.90 A"/>
    <property type="chains" value="A=72-189"/>
</dbReference>
<dbReference type="PDB" id="5KUI">
    <property type="method" value="X-ray"/>
    <property type="resolution" value="2.70 A"/>
    <property type="chains" value="A=72-189"/>
</dbReference>
<dbReference type="PDB" id="5KUJ">
    <property type="method" value="X-ray"/>
    <property type="resolution" value="1.60 A"/>
    <property type="chains" value="A=72-189"/>
</dbReference>
<dbReference type="PDB" id="6JG0">
    <property type="method" value="X-ray"/>
    <property type="resolution" value="2.50 A"/>
    <property type="chains" value="A=75-165"/>
</dbReference>
<dbReference type="PDB" id="6K7X">
    <property type="method" value="EM"/>
    <property type="resolution" value="3.27 A"/>
    <property type="chains" value="A/B/C/D/K/L/M/N=73-348"/>
</dbReference>
<dbReference type="PDB" id="6K7Y">
    <property type="method" value="EM"/>
    <property type="resolution" value="3.60 A"/>
    <property type="chains" value="A/B/C/D/N/O/P/Q=73-348"/>
</dbReference>
<dbReference type="PDB" id="6KVX">
    <property type="method" value="X-ray"/>
    <property type="resolution" value="2.85 A"/>
    <property type="chains" value="A=75-164"/>
</dbReference>
<dbReference type="PDB" id="6O58">
    <property type="method" value="EM"/>
    <property type="resolution" value="3.80 A"/>
    <property type="chains" value="A/C/E/G/I/K/M/O=1-351"/>
</dbReference>
<dbReference type="PDB" id="6O5B">
    <property type="method" value="EM"/>
    <property type="resolution" value="3.60 A"/>
    <property type="chains" value="A/C/E/G/I/J/K/L=1-351"/>
</dbReference>
<dbReference type="PDB" id="6WDN">
    <property type="method" value="EM"/>
    <property type="resolution" value="3.20 A"/>
    <property type="chains" value="C/E/G/I=169-346"/>
</dbReference>
<dbReference type="PDB" id="6WDO">
    <property type="method" value="EM"/>
    <property type="resolution" value="3.60 A"/>
    <property type="chains" value="A/E/G/I/M/O=74-346, C/K=74-341"/>
</dbReference>
<dbReference type="PDB" id="6XJV">
    <property type="method" value="EM"/>
    <property type="resolution" value="4.17 A"/>
    <property type="chains" value="A/C/E/G/I/K/M/O=1-351"/>
</dbReference>
<dbReference type="PDB" id="6XJX">
    <property type="method" value="EM"/>
    <property type="resolution" value="4.60 A"/>
    <property type="chains" value="A/C/E/G=1-351"/>
</dbReference>
<dbReference type="PDB" id="8URG">
    <property type="method" value="X-ray"/>
    <property type="resolution" value="1.63 A"/>
    <property type="chains" value="A=72-189"/>
</dbReference>
<dbReference type="PDBsum" id="4XSJ"/>
<dbReference type="PDBsum" id="4XTB"/>
<dbReference type="PDBsum" id="5BZ6"/>
<dbReference type="PDBsum" id="5KUE"/>
<dbReference type="PDBsum" id="5KUG"/>
<dbReference type="PDBsum" id="5KUI"/>
<dbReference type="PDBsum" id="5KUJ"/>
<dbReference type="PDBsum" id="6JG0"/>
<dbReference type="PDBsum" id="6K7X"/>
<dbReference type="PDBsum" id="6K7Y"/>
<dbReference type="PDBsum" id="6KVX"/>
<dbReference type="PDBsum" id="6O58"/>
<dbReference type="PDBsum" id="6O5B"/>
<dbReference type="PDBsum" id="6WDN"/>
<dbReference type="PDBsum" id="6WDO"/>
<dbReference type="PDBsum" id="6XJV"/>
<dbReference type="PDBsum" id="6XJX"/>
<dbReference type="PDBsum" id="8URG"/>
<dbReference type="EMDB" id="EMD-0625"/>
<dbReference type="EMDB" id="EMD-0626"/>
<dbReference type="EMDB" id="EMD-0627"/>
<dbReference type="EMDB" id="EMD-21642"/>
<dbReference type="EMDB" id="EMD-21643"/>
<dbReference type="EMDB" id="EMD-22215"/>
<dbReference type="EMDB" id="EMD-22216"/>
<dbReference type="EMDB" id="EMD-9944"/>
<dbReference type="EMDB" id="EMD-9945"/>
<dbReference type="SMR" id="Q8NE86"/>
<dbReference type="BioGRID" id="124733">
    <property type="interactions" value="202"/>
</dbReference>
<dbReference type="ComplexPortal" id="CPX-5961">
    <property type="entry name" value="Mitochondrial calcium uniporter complex, MICU1-MICU2 variant"/>
</dbReference>
<dbReference type="ComplexPortal" id="CPX-5963">
    <property type="entry name" value="Mitochondrial calcium uniporter complex, MICU1 variant"/>
</dbReference>
<dbReference type="ComplexPortal" id="CPX-5965">
    <property type="entry name" value="Mitochondrial calcium uniporter complex, MICU1-MICU3 variant"/>
</dbReference>
<dbReference type="ComplexPortal" id="CPX-5966">
    <property type="entry name" value="Mitochondrial calcium uniporter complex, MICUB variant"/>
</dbReference>
<dbReference type="CORUM" id="Q8NE86"/>
<dbReference type="DIP" id="DIP-60468N"/>
<dbReference type="FunCoup" id="Q8NE86">
    <property type="interactions" value="1528"/>
</dbReference>
<dbReference type="IntAct" id="Q8NE86">
    <property type="interactions" value="60"/>
</dbReference>
<dbReference type="MINT" id="Q8NE86"/>
<dbReference type="STRING" id="9606.ENSP00000362144"/>
<dbReference type="GlyGen" id="Q8NE86">
    <property type="glycosylation" value="1 site, 1 O-linked glycan (1 site)"/>
</dbReference>
<dbReference type="iPTMnet" id="Q8NE86"/>
<dbReference type="MetOSite" id="Q8NE86"/>
<dbReference type="PhosphoSitePlus" id="Q8NE86"/>
<dbReference type="SwissPalm" id="Q8NE86"/>
<dbReference type="BioMuta" id="MCU"/>
<dbReference type="DMDM" id="74730222"/>
<dbReference type="jPOST" id="Q8NE86"/>
<dbReference type="MassIVE" id="Q8NE86"/>
<dbReference type="PaxDb" id="9606-ENSP00000362144"/>
<dbReference type="PeptideAtlas" id="Q8NE86"/>
<dbReference type="ProteomicsDB" id="73134">
    <molecule id="Q8NE86-1"/>
</dbReference>
<dbReference type="ProteomicsDB" id="73135">
    <molecule id="Q8NE86-2"/>
</dbReference>
<dbReference type="ProteomicsDB" id="73136">
    <molecule id="Q8NE86-3"/>
</dbReference>
<dbReference type="Pumba" id="Q8NE86"/>
<dbReference type="TopDownProteomics" id="Q8NE86-3">
    <molecule id="Q8NE86-3"/>
</dbReference>
<dbReference type="Antibodypedia" id="3091">
    <property type="antibodies" value="81 antibodies from 21 providers"/>
</dbReference>
<dbReference type="DNASU" id="90550"/>
<dbReference type="Ensembl" id="ENST00000357157.10">
    <molecule id="Q8NE86-2"/>
    <property type="protein sequence ID" value="ENSP00000349680.6"/>
    <property type="gene ID" value="ENSG00000156026.15"/>
</dbReference>
<dbReference type="Ensembl" id="ENST00000373053.8">
    <molecule id="Q8NE86-1"/>
    <property type="protein sequence ID" value="ENSP00000362144.3"/>
    <property type="gene ID" value="ENSG00000156026.15"/>
</dbReference>
<dbReference type="Ensembl" id="ENST00000536019.5">
    <molecule id="Q8NE86-3"/>
    <property type="protein sequence ID" value="ENSP00000440913.1"/>
    <property type="gene ID" value="ENSG00000156026.15"/>
</dbReference>
<dbReference type="GeneID" id="90550"/>
<dbReference type="KEGG" id="hsa:90550"/>
<dbReference type="MANE-Select" id="ENST00000373053.8">
    <property type="protein sequence ID" value="ENSP00000362144.3"/>
    <property type="RefSeq nucleotide sequence ID" value="NM_138357.3"/>
    <property type="RefSeq protein sequence ID" value="NP_612366.1"/>
</dbReference>
<dbReference type="UCSC" id="uc001jtc.3">
    <molecule id="Q8NE86-1"/>
    <property type="organism name" value="human"/>
</dbReference>
<dbReference type="AGR" id="HGNC:23526"/>
<dbReference type="CTD" id="90550"/>
<dbReference type="DisGeNET" id="90550"/>
<dbReference type="GeneCards" id="MCU"/>
<dbReference type="HGNC" id="HGNC:23526">
    <property type="gene designation" value="MCU"/>
</dbReference>
<dbReference type="HPA" id="ENSG00000156026">
    <property type="expression patterns" value="Tissue enhanced (tongue)"/>
</dbReference>
<dbReference type="MIM" id="614197">
    <property type="type" value="gene"/>
</dbReference>
<dbReference type="neXtProt" id="NX_Q8NE86"/>
<dbReference type="OpenTargets" id="ENSG00000156026"/>
<dbReference type="PharmGKB" id="PA134888841"/>
<dbReference type="VEuPathDB" id="HostDB:ENSG00000156026"/>
<dbReference type="eggNOG" id="KOG2966">
    <property type="taxonomic scope" value="Eukaryota"/>
</dbReference>
<dbReference type="GeneTree" id="ENSGT00940000157528"/>
<dbReference type="HOGENOM" id="CLU_056554_0_0_1"/>
<dbReference type="InParanoid" id="Q8NE86"/>
<dbReference type="OMA" id="DDIYVEY"/>
<dbReference type="OrthoDB" id="278338at2759"/>
<dbReference type="PAN-GO" id="Q8NE86">
    <property type="GO annotations" value="6 GO annotations based on evolutionary models"/>
</dbReference>
<dbReference type="PhylomeDB" id="Q8NE86"/>
<dbReference type="TreeFam" id="TF314435"/>
<dbReference type="PathwayCommons" id="Q8NE86"/>
<dbReference type="Reactome" id="R-HSA-8949215">
    <property type="pathway name" value="Mitochondrial calcium ion transport"/>
</dbReference>
<dbReference type="Reactome" id="R-HSA-8949664">
    <property type="pathway name" value="Processing of SMDT1"/>
</dbReference>
<dbReference type="SignaLink" id="Q8NE86"/>
<dbReference type="SIGNOR" id="Q8NE86"/>
<dbReference type="BioGRID-ORCS" id="90550">
    <property type="hits" value="11 hits in 1158 CRISPR screens"/>
</dbReference>
<dbReference type="CD-CODE" id="5965E019">
    <property type="entry name" value="mtRNA granule"/>
</dbReference>
<dbReference type="ChiTaRS" id="MCU">
    <property type="organism name" value="human"/>
</dbReference>
<dbReference type="EvolutionaryTrace" id="Q8NE86"/>
<dbReference type="GenomeRNAi" id="90550"/>
<dbReference type="Pharos" id="Q8NE86">
    <property type="development level" value="Tbio"/>
</dbReference>
<dbReference type="PRO" id="PR:Q8NE86"/>
<dbReference type="Proteomes" id="UP000005640">
    <property type="component" value="Chromosome 10"/>
</dbReference>
<dbReference type="RNAct" id="Q8NE86">
    <property type="molecule type" value="protein"/>
</dbReference>
<dbReference type="Bgee" id="ENSG00000156026">
    <property type="expression patterns" value="Expressed in tibialis anterior and 154 other cell types or tissues"/>
</dbReference>
<dbReference type="ExpressionAtlas" id="Q8NE86">
    <property type="expression patterns" value="baseline and differential"/>
</dbReference>
<dbReference type="GO" id="GO:0034704">
    <property type="term" value="C:calcium channel complex"/>
    <property type="evidence" value="ECO:0000314"/>
    <property type="project" value="UniProtKB"/>
</dbReference>
<dbReference type="GO" id="GO:0005743">
    <property type="term" value="C:mitochondrial inner membrane"/>
    <property type="evidence" value="ECO:0000314"/>
    <property type="project" value="UniProtKB"/>
</dbReference>
<dbReference type="GO" id="GO:0005739">
    <property type="term" value="C:mitochondrion"/>
    <property type="evidence" value="ECO:0000314"/>
    <property type="project" value="HPA"/>
</dbReference>
<dbReference type="GO" id="GO:1990246">
    <property type="term" value="C:uniplex complex"/>
    <property type="evidence" value="ECO:0000314"/>
    <property type="project" value="UniProtKB"/>
</dbReference>
<dbReference type="GO" id="GO:0005262">
    <property type="term" value="F:calcium channel activity"/>
    <property type="evidence" value="ECO:0000314"/>
    <property type="project" value="UniProtKB"/>
</dbReference>
<dbReference type="GO" id="GO:0042802">
    <property type="term" value="F:identical protein binding"/>
    <property type="evidence" value="ECO:0000353"/>
    <property type="project" value="IntAct"/>
</dbReference>
<dbReference type="GO" id="GO:0015292">
    <property type="term" value="F:uniporter activity"/>
    <property type="evidence" value="ECO:0000314"/>
    <property type="project" value="UniProtKB"/>
</dbReference>
<dbReference type="GO" id="GO:0036444">
    <property type="term" value="P:calcium import into the mitochondrion"/>
    <property type="evidence" value="ECO:0000314"/>
    <property type="project" value="UniProtKB"/>
</dbReference>
<dbReference type="GO" id="GO:0019722">
    <property type="term" value="P:calcium-mediated signaling"/>
    <property type="evidence" value="ECO:0000314"/>
    <property type="project" value="UniProtKB"/>
</dbReference>
<dbReference type="GO" id="GO:0072732">
    <property type="term" value="P:cellular response to calcium ion starvation"/>
    <property type="evidence" value="ECO:0000315"/>
    <property type="project" value="UniProt"/>
</dbReference>
<dbReference type="GO" id="GO:0042593">
    <property type="term" value="P:glucose homeostasis"/>
    <property type="evidence" value="ECO:0000315"/>
    <property type="project" value="UniProtKB"/>
</dbReference>
<dbReference type="GO" id="GO:0051560">
    <property type="term" value="P:mitochondrial calcium ion homeostasis"/>
    <property type="evidence" value="ECO:0000314"/>
    <property type="project" value="ComplexPortal"/>
</dbReference>
<dbReference type="GO" id="GO:0006851">
    <property type="term" value="P:mitochondrial calcium ion transmembrane transport"/>
    <property type="evidence" value="ECO:0000314"/>
    <property type="project" value="UniProtKB"/>
</dbReference>
<dbReference type="GO" id="GO:0032024">
    <property type="term" value="P:positive regulation of insulin secretion"/>
    <property type="evidence" value="ECO:0000315"/>
    <property type="project" value="UniProtKB"/>
</dbReference>
<dbReference type="GO" id="GO:0051561">
    <property type="term" value="P:positive regulation of mitochondrial calcium ion concentration"/>
    <property type="evidence" value="ECO:0000314"/>
    <property type="project" value="UniProtKB"/>
</dbReference>
<dbReference type="GO" id="GO:0090141">
    <property type="term" value="P:positive regulation of mitochondrial fission"/>
    <property type="evidence" value="ECO:0000315"/>
    <property type="project" value="CACAO"/>
</dbReference>
<dbReference type="GO" id="GO:0090023">
    <property type="term" value="P:positive regulation of neutrophil chemotaxis"/>
    <property type="evidence" value="ECO:0000315"/>
    <property type="project" value="CACAO"/>
</dbReference>
<dbReference type="GO" id="GO:0051259">
    <property type="term" value="P:protein complex oligomerization"/>
    <property type="evidence" value="ECO:0000314"/>
    <property type="project" value="UniProtKB"/>
</dbReference>
<dbReference type="InterPro" id="IPR006769">
    <property type="entry name" value="MCU_C"/>
</dbReference>
<dbReference type="InterPro" id="IPR039055">
    <property type="entry name" value="MCU_fam"/>
</dbReference>
<dbReference type="PANTHER" id="PTHR13462">
    <property type="entry name" value="CALCIUM UNIPORTER PROTEIN, MITOCHONDRIAL"/>
    <property type="match status" value="1"/>
</dbReference>
<dbReference type="PANTHER" id="PTHR13462:SF16">
    <property type="entry name" value="CALCIUM UNIPORTER PROTEIN, MITOCHONDRIAL"/>
    <property type="match status" value="1"/>
</dbReference>
<dbReference type="Pfam" id="PF04678">
    <property type="entry name" value="MCU"/>
    <property type="match status" value="1"/>
</dbReference>
<comment type="function">
    <text evidence="1 3 4 5 6 7 9 10 12 14 16 18 20 21 27 28 29 30 31 33 34 36 37 38">Channel-forming and calcium-conducting subunit of the mitochondrial inner membrane calcium uniporter complex (uniplex), which mediates calcium uptake into the mitochondrial matrix (PubMed:21685886, PubMed:21685888, PubMed:22822213, PubMed:22829870, PubMed:22904319, PubMed:23101630, PubMed:23178883, PubMed:23755363, PubMed:24332854, PubMed:24560927, PubMed:26341627, PubMed:29954988, PubMed:29995857, PubMed:30454562, PubMed:30638448, PubMed:31080062, PubMed:32494073, PubMed:32762847, PubMed:33296646, PubMed:37036971, PubMed:37126688). MCU channel activity is regulated by the calcium-sensor subunits of the uniplex MICU1 and MICU2 (or MICU3) (PubMed:24560927, PubMed:26903221, PubMed:30454562, PubMed:30638448, PubMed:32494073, PubMed:32762847, PubMed:37036971, PubMed:37126688). Mitochondrial calcium homeostasis plays key roles in cellular physiology and regulates ATP production, cytoplasmic calcium signals and activation of cell death pathways (PubMed:21685886, PubMed:21685888, PubMed:22822213, PubMed:22829870, PubMed:22904319, PubMed:23101630, PubMed:23178883, PubMed:23755363, PubMed:24332854, PubMed:24560927, PubMed:26341627, PubMed:29954988, PubMed:32494073, PubMed:32762847). Involved in buffering the amplitude of systolic calcium rises in cardiomyocytes (PubMed:22822213). While dispensable for baseline homeostatic cardiac function, acts as a key regulator of short-term mitochondrial calcium loading underlying a 'fight-or-flight' response during acute stress: acts by mediating a rapid increase of mitochondrial calcium in pacemaker cells (PubMed:25603276). Participates in mitochondrial permeability transition during ischemia-reperfusion injury (By similarity). Mitochondrial calcium uptake in skeletal muscle cells is involved in muscle size in adults (By similarity). Regulates synaptic vesicle endocytosis kinetics in central nerve terminal (By similarity). Regulates glucose-dependent insulin secretion in pancreatic beta-cells by regulating mitochondrial calcium uptake (PubMed:22829870, PubMed:22904319). Involved in antigen processing and presentation (By similarity).</text>
</comment>
<comment type="catalytic activity">
    <reaction evidence="4 16 27 28 30 31 33 36">
        <text>Ca(2+)(in) = Ca(2+)(out)</text>
        <dbReference type="Rhea" id="RHEA:29671"/>
        <dbReference type="ChEBI" id="CHEBI:29108"/>
    </reaction>
</comment>
<comment type="activity regulation">
    <text evidence="12 16 21 31 33 34 36 37 38">MCU channel activity is regulated by the heterodimer composed of MICU1 and either MICU2 or MICU3, which act as calcium-sensors (PubMed:24560927, PubMed:26903221, PubMed:32494073, PubMed:32762847, PubMed:37036971, PubMed:37126688). At low calcium levels, MICU1 occludes the pore of the MCU channel, preventing mitochondrial calcium uptake (PubMed:32494073, PubMed:32762847, PubMed:37036971, PubMed:37126688). At higher calcium levels, calcium-binding to MICU1 and MICU2 (or MICU3) induces a conformational change that weakens MCU-MICU1 interactions and moves the MICU1-MICU2 heterodimer away from the pore, allowing calcium permeation through the channel (PubMed:32494073, PubMed:32762847). MCU channel activity is gated by EMRE/SMDT1 via the juxtamembrane helix loop (PubMed:31080062, PubMed:33296646). Inhibited by ruthenium red or its derivative Ru360 (PubMed:23755363, PubMed:37036971, PubMed:37126688).</text>
</comment>
<comment type="subunit">
    <text evidence="10 13 15 20 22 25 31 33 35">Homotetramer (PubMed:32494073). Component of the uniplex complex, composed of MCU, EMRE/SMDT1, MICU1 and MICU2 (or MICU3) in a 4:4:1:1 stoichiometry (PubMed:24231807, PubMed:26341627, PubMed:31080062, PubMed:32494073, PubMed:32862359). Interacts with CCDC109B/MCUB; this inhibits channel activity (PubMed:27184846). Interacts with MCUR1 (PubMed:23178883, PubMed:26341627, PubMed:26976564, PubMed:27184846). Interactions with MICU1 and MCUR1 are mutually exclusive (PubMed:23178883). Interacts with SLC25A23 (PubMed:24430870).</text>
</comment>
<comment type="interaction">
    <interactant intactId="EBI-6552124">
        <id>Q8NE86</id>
    </interactant>
    <interactant intactId="EBI-2371996">
        <id>Q9BPX6</id>
        <label>MICU1</label>
    </interactant>
    <organismsDiffer>false</organismsDiffer>
    <experiments>7</experiments>
</comment>
<comment type="interaction">
    <interactant intactId="EBI-6552124">
        <id>Q8NE86</id>
    </interactant>
    <interactant intactId="EBI-11908005">
        <id>Q9H4I9</id>
        <label>SMDT1</label>
    </interactant>
    <organismsDiffer>false</organismsDiffer>
    <experiments>8</experiments>
</comment>
<comment type="interaction">
    <interactant intactId="EBI-15932889">
        <id>Q8NE86-1</id>
    </interactant>
    <interactant intactId="EBI-15932889">
        <id>Q8NE86-1</id>
        <label>MCU</label>
    </interactant>
    <organismsDiffer>false</organismsDiffer>
    <experiments>2</experiments>
</comment>
<comment type="interaction">
    <interactant intactId="EBI-15932889">
        <id>Q8NE86-1</id>
    </interactant>
    <interactant intactId="EBI-14404755">
        <id>Q96AQ8</id>
        <label>MCUR1</label>
    </interactant>
    <organismsDiffer>false</organismsDiffer>
    <experiments>4</experiments>
</comment>
<comment type="interaction">
    <interactant intactId="EBI-15932889">
        <id>Q8NE86-1</id>
    </interactant>
    <interactant intactId="EBI-2371996">
        <id>Q9BPX6</id>
        <label>MICU1</label>
    </interactant>
    <organismsDiffer>false</organismsDiffer>
    <experiments>2</experiments>
</comment>
<comment type="interaction">
    <interactant intactId="EBI-15932889">
        <id>Q8NE86-1</id>
    </interactant>
    <interactant intactId="EBI-5456336">
        <id>Q9BPX6-1</id>
        <label>MICU1</label>
    </interactant>
    <organismsDiffer>false</organismsDiffer>
    <experiments>2</experiments>
</comment>
<comment type="subcellular location">
    <subcellularLocation>
        <location evidence="3 4 12 13 23 47 49">Mitochondrion inner membrane</location>
        <topology evidence="3 4 13 31 33 34 35">Multi-pass membrane protein</topology>
    </subcellularLocation>
</comment>
<comment type="alternative products">
    <event type="alternative splicing"/>
    <isoform>
        <id>Q8NE86-1</id>
        <name>1</name>
        <sequence type="displayed"/>
    </isoform>
    <isoform>
        <id>Q8NE86-2</id>
        <name>2</name>
        <sequence type="described" ref="VSP_024263"/>
    </isoform>
    <isoform>
        <id>Q8NE86-3</id>
        <name>3</name>
        <sequence type="described" ref="VSP_041687"/>
    </isoform>
</comment>
<comment type="induction">
    <text evidence="11 19">MCU transcripts are down-regulated by microRNA miR-25 (PubMed:23246404). Down-regulation by miR-25 may protect cardiomyocytes against oxidative damage in cardiomyocytes (PubMed:25764156).</text>
</comment>
<comment type="domain">
    <text evidence="33">The selectivity filter, in which calcium ions are arranged in single file, is composed of two acidic rings separated by one helical turn along the central axis of the channel pore.</text>
</comment>
<comment type="domain">
    <text evidence="20">The N-terminal MCU domain is required for efficient Ca(2+) uptake and for interaction with MCUR1 (PubMed:26341627). It is not required for targeting to the mitochondria, oligomerization, interaction with MICU1 and MICU2, or assembly of the uniplex complex (PubMed:26341627).</text>
</comment>
<comment type="PTM">
    <text evidence="17 44 45 46">Phosphorylation by CaMK2 in heart leads to increased MCU current (PubMed:23051746, PubMed:25254481). The regulation of MCU by CaMK2 is however subject to discussion: another group was unable to reproduce these results (PubMed:25254480). Phosphorylated on tyrosines by PTK2B/PYK2, promoting oligomerization (PubMed:24800979).</text>
</comment>
<comment type="PTM">
    <text evidence="26">Glutathionylation at Cys-97 in response to reactive oxygen species (ROS) promotes MCU higher-order assembly, leading to constitutive activation of the MCU channel and mitochondrial calcium overload.</text>
</comment>
<comment type="PTM">
    <text evidence="32">Undergoes proteolytic degradation by SPG7.</text>
</comment>
<comment type="similarity">
    <text evidence="43">Belongs to the MCU (TC 1.A.77) family.</text>
</comment>